<organism>
    <name type="scientific">Flavobacterium johnsoniae (strain ATCC 17061 / DSM 2064 / JCM 8514 / BCRC 14874 / CCUG 350202 / NBRC 14942 / NCIMB 11054 / UW101)</name>
    <name type="common">Cytophaga johnsonae</name>
    <dbReference type="NCBI Taxonomy" id="376686"/>
    <lineage>
        <taxon>Bacteria</taxon>
        <taxon>Pseudomonadati</taxon>
        <taxon>Bacteroidota</taxon>
        <taxon>Flavobacteriia</taxon>
        <taxon>Flavobacteriales</taxon>
        <taxon>Flavobacteriaceae</taxon>
        <taxon>Flavobacterium</taxon>
    </lineage>
</organism>
<sequence length="78" mass="8839">MSRVCDLTGKRAMVGNNVSHAMNKTKRKFSVNLVKKRFYLPEEDRWITLRVAASTIKTINKNGITAVLKKAQSEGFIK</sequence>
<dbReference type="EMBL" id="CP000685">
    <property type="protein sequence ID" value="ABQ07982.1"/>
    <property type="molecule type" value="Genomic_DNA"/>
</dbReference>
<dbReference type="RefSeq" id="WP_008468080.1">
    <property type="nucleotide sequence ID" value="NZ_MUGZ01000004.1"/>
</dbReference>
<dbReference type="SMR" id="A5F9Z1"/>
<dbReference type="STRING" id="376686.Fjoh_4983"/>
<dbReference type="KEGG" id="fjo:Fjoh_4983"/>
<dbReference type="eggNOG" id="COG0227">
    <property type="taxonomic scope" value="Bacteria"/>
</dbReference>
<dbReference type="HOGENOM" id="CLU_064548_3_1_10"/>
<dbReference type="OrthoDB" id="9805609at2"/>
<dbReference type="Proteomes" id="UP000006694">
    <property type="component" value="Chromosome"/>
</dbReference>
<dbReference type="GO" id="GO:1990904">
    <property type="term" value="C:ribonucleoprotein complex"/>
    <property type="evidence" value="ECO:0007669"/>
    <property type="project" value="UniProtKB-KW"/>
</dbReference>
<dbReference type="GO" id="GO:0005840">
    <property type="term" value="C:ribosome"/>
    <property type="evidence" value="ECO:0007669"/>
    <property type="project" value="UniProtKB-KW"/>
</dbReference>
<dbReference type="GO" id="GO:0003735">
    <property type="term" value="F:structural constituent of ribosome"/>
    <property type="evidence" value="ECO:0007669"/>
    <property type="project" value="InterPro"/>
</dbReference>
<dbReference type="GO" id="GO:0006412">
    <property type="term" value="P:translation"/>
    <property type="evidence" value="ECO:0007669"/>
    <property type="project" value="UniProtKB-UniRule"/>
</dbReference>
<dbReference type="FunFam" id="2.30.170.40:FF:000001">
    <property type="entry name" value="50S ribosomal protein L28"/>
    <property type="match status" value="1"/>
</dbReference>
<dbReference type="Gene3D" id="2.30.170.40">
    <property type="entry name" value="Ribosomal protein L28/L24"/>
    <property type="match status" value="1"/>
</dbReference>
<dbReference type="HAMAP" id="MF_00373">
    <property type="entry name" value="Ribosomal_bL28"/>
    <property type="match status" value="1"/>
</dbReference>
<dbReference type="InterPro" id="IPR026569">
    <property type="entry name" value="Ribosomal_bL28"/>
</dbReference>
<dbReference type="InterPro" id="IPR034704">
    <property type="entry name" value="Ribosomal_bL28/bL31-like_sf"/>
</dbReference>
<dbReference type="InterPro" id="IPR001383">
    <property type="entry name" value="Ribosomal_bL28_bact-type"/>
</dbReference>
<dbReference type="InterPro" id="IPR037147">
    <property type="entry name" value="Ribosomal_bL28_sf"/>
</dbReference>
<dbReference type="NCBIfam" id="TIGR00009">
    <property type="entry name" value="L28"/>
    <property type="match status" value="1"/>
</dbReference>
<dbReference type="PANTHER" id="PTHR13528">
    <property type="entry name" value="39S RIBOSOMAL PROTEIN L28, MITOCHONDRIAL"/>
    <property type="match status" value="1"/>
</dbReference>
<dbReference type="PANTHER" id="PTHR13528:SF2">
    <property type="entry name" value="LARGE RIBOSOMAL SUBUNIT PROTEIN BL28M"/>
    <property type="match status" value="1"/>
</dbReference>
<dbReference type="Pfam" id="PF00830">
    <property type="entry name" value="Ribosomal_L28"/>
    <property type="match status" value="1"/>
</dbReference>
<dbReference type="SUPFAM" id="SSF143800">
    <property type="entry name" value="L28p-like"/>
    <property type="match status" value="1"/>
</dbReference>
<reference key="1">
    <citation type="journal article" date="2009" name="Appl. Environ. Microbiol.">
        <title>Novel features of the polysaccharide-digesting gliding bacterium Flavobacterium johnsoniae as revealed by genome sequence analysis.</title>
        <authorList>
            <person name="McBride M.J."/>
            <person name="Xie G."/>
            <person name="Martens E.C."/>
            <person name="Lapidus A."/>
            <person name="Henrissat B."/>
            <person name="Rhodes R.G."/>
            <person name="Goltsman E."/>
            <person name="Wang W."/>
            <person name="Xu J."/>
            <person name="Hunnicutt D.W."/>
            <person name="Staroscik A.M."/>
            <person name="Hoover T.R."/>
            <person name="Cheng Y.Q."/>
            <person name="Stein J.L."/>
        </authorList>
    </citation>
    <scope>NUCLEOTIDE SEQUENCE [LARGE SCALE GENOMIC DNA]</scope>
    <source>
        <strain>ATCC 17061 / DSM 2064 / JCM 8514 / BCRC 14874 / CCUG 350202 / NBRC 14942 / NCIMB 11054 / UW101</strain>
    </source>
</reference>
<comment type="similarity">
    <text evidence="1">Belongs to the bacterial ribosomal protein bL28 family.</text>
</comment>
<proteinExistence type="inferred from homology"/>
<name>RL28_FLAJ1</name>
<feature type="chain" id="PRO_1000079849" description="Large ribosomal subunit protein bL28">
    <location>
        <begin position="1"/>
        <end position="78"/>
    </location>
</feature>
<keyword id="KW-0687">Ribonucleoprotein</keyword>
<keyword id="KW-0689">Ribosomal protein</keyword>
<gene>
    <name evidence="1" type="primary">rpmB</name>
    <name type="ordered locus">Fjoh_4983</name>
</gene>
<accession>A5F9Z1</accession>
<evidence type="ECO:0000255" key="1">
    <source>
        <dbReference type="HAMAP-Rule" id="MF_00373"/>
    </source>
</evidence>
<evidence type="ECO:0000305" key="2"/>
<protein>
    <recommendedName>
        <fullName evidence="1">Large ribosomal subunit protein bL28</fullName>
    </recommendedName>
    <alternativeName>
        <fullName evidence="2">50S ribosomal protein L28</fullName>
    </alternativeName>
</protein>